<accession>Q4KHG4</accession>
<proteinExistence type="inferred from homology"/>
<protein>
    <recommendedName>
        <fullName evidence="1">Acyl-[acyl-carrier-protein]--UDP-N-acetylglucosamine O-acyltransferase</fullName>
        <shortName evidence="1">UDP-N-acetylglucosamine acyltransferase</shortName>
        <ecNumber evidence="1">2.3.1.129</ecNumber>
    </recommendedName>
</protein>
<organism>
    <name type="scientific">Pseudomonas fluorescens (strain ATCC BAA-477 / NRRL B-23932 / Pf-5)</name>
    <dbReference type="NCBI Taxonomy" id="220664"/>
    <lineage>
        <taxon>Bacteria</taxon>
        <taxon>Pseudomonadati</taxon>
        <taxon>Pseudomonadota</taxon>
        <taxon>Gammaproteobacteria</taxon>
        <taxon>Pseudomonadales</taxon>
        <taxon>Pseudomonadaceae</taxon>
        <taxon>Pseudomonas</taxon>
    </lineage>
</organism>
<feature type="chain" id="PRO_0000302587" description="Acyl-[acyl-carrier-protein]--UDP-N-acetylglucosamine O-acyltransferase">
    <location>
        <begin position="1"/>
        <end position="258"/>
    </location>
</feature>
<dbReference type="EC" id="2.3.1.129" evidence="1"/>
<dbReference type="EMBL" id="CP000076">
    <property type="protein sequence ID" value="AAY90475.1"/>
    <property type="molecule type" value="Genomic_DNA"/>
</dbReference>
<dbReference type="RefSeq" id="WP_011059535.1">
    <property type="nucleotide sequence ID" value="NC_004129.6"/>
</dbReference>
<dbReference type="SMR" id="Q4KHG4"/>
<dbReference type="STRING" id="220664.PFL_1188"/>
<dbReference type="GeneID" id="57474192"/>
<dbReference type="KEGG" id="pfl:PFL_1188"/>
<dbReference type="PATRIC" id="fig|220664.5.peg.1220"/>
<dbReference type="eggNOG" id="COG1043">
    <property type="taxonomic scope" value="Bacteria"/>
</dbReference>
<dbReference type="HOGENOM" id="CLU_061249_0_0_6"/>
<dbReference type="UniPathway" id="UPA00359">
    <property type="reaction ID" value="UER00477"/>
</dbReference>
<dbReference type="Proteomes" id="UP000008540">
    <property type="component" value="Chromosome"/>
</dbReference>
<dbReference type="GO" id="GO:0005737">
    <property type="term" value="C:cytoplasm"/>
    <property type="evidence" value="ECO:0007669"/>
    <property type="project" value="UniProtKB-SubCell"/>
</dbReference>
<dbReference type="GO" id="GO:0016020">
    <property type="term" value="C:membrane"/>
    <property type="evidence" value="ECO:0007669"/>
    <property type="project" value="GOC"/>
</dbReference>
<dbReference type="GO" id="GO:0008780">
    <property type="term" value="F:acyl-[acyl-carrier-protein]-UDP-N-acetylglucosamine O-acyltransferase activity"/>
    <property type="evidence" value="ECO:0007669"/>
    <property type="project" value="UniProtKB-UniRule"/>
</dbReference>
<dbReference type="GO" id="GO:0009245">
    <property type="term" value="P:lipid A biosynthetic process"/>
    <property type="evidence" value="ECO:0007669"/>
    <property type="project" value="UniProtKB-UniRule"/>
</dbReference>
<dbReference type="CDD" id="cd03351">
    <property type="entry name" value="LbH_UDP-GlcNAc_AT"/>
    <property type="match status" value="1"/>
</dbReference>
<dbReference type="FunFam" id="2.160.10.10:FF:000003">
    <property type="entry name" value="Acyl-[acyl-carrier-protein]--UDP-N-acetylglucosamine O-acyltransferase"/>
    <property type="match status" value="1"/>
</dbReference>
<dbReference type="Gene3D" id="2.160.10.10">
    <property type="entry name" value="Hexapeptide repeat proteins"/>
    <property type="match status" value="1"/>
</dbReference>
<dbReference type="Gene3D" id="1.20.1180.10">
    <property type="entry name" value="Udp N-acetylglucosamine O-acyltransferase, C-terminal domain"/>
    <property type="match status" value="1"/>
</dbReference>
<dbReference type="HAMAP" id="MF_00387">
    <property type="entry name" value="LpxA"/>
    <property type="match status" value="1"/>
</dbReference>
<dbReference type="InterPro" id="IPR029098">
    <property type="entry name" value="Acetyltransf_C"/>
</dbReference>
<dbReference type="InterPro" id="IPR037157">
    <property type="entry name" value="Acetyltransf_C_sf"/>
</dbReference>
<dbReference type="InterPro" id="IPR001451">
    <property type="entry name" value="Hexapep"/>
</dbReference>
<dbReference type="InterPro" id="IPR018357">
    <property type="entry name" value="Hexapep_transf_CS"/>
</dbReference>
<dbReference type="InterPro" id="IPR010137">
    <property type="entry name" value="Lipid_A_LpxA"/>
</dbReference>
<dbReference type="InterPro" id="IPR011004">
    <property type="entry name" value="Trimer_LpxA-like_sf"/>
</dbReference>
<dbReference type="NCBIfam" id="TIGR01852">
    <property type="entry name" value="lipid_A_lpxA"/>
    <property type="match status" value="1"/>
</dbReference>
<dbReference type="NCBIfam" id="NF003657">
    <property type="entry name" value="PRK05289.1"/>
    <property type="match status" value="1"/>
</dbReference>
<dbReference type="PANTHER" id="PTHR43480">
    <property type="entry name" value="ACYL-[ACYL-CARRIER-PROTEIN]--UDP-N-ACETYLGLUCOSAMINE O-ACYLTRANSFERASE"/>
    <property type="match status" value="1"/>
</dbReference>
<dbReference type="PANTHER" id="PTHR43480:SF1">
    <property type="entry name" value="ACYL-[ACYL-CARRIER-PROTEIN]--UDP-N-ACETYLGLUCOSAMINE O-ACYLTRANSFERASE, MITOCHONDRIAL-RELATED"/>
    <property type="match status" value="1"/>
</dbReference>
<dbReference type="Pfam" id="PF13720">
    <property type="entry name" value="Acetyltransf_11"/>
    <property type="match status" value="1"/>
</dbReference>
<dbReference type="Pfam" id="PF00132">
    <property type="entry name" value="Hexapep"/>
    <property type="match status" value="1"/>
</dbReference>
<dbReference type="PIRSF" id="PIRSF000456">
    <property type="entry name" value="UDP-GlcNAc_acltr"/>
    <property type="match status" value="1"/>
</dbReference>
<dbReference type="SUPFAM" id="SSF51161">
    <property type="entry name" value="Trimeric LpxA-like enzymes"/>
    <property type="match status" value="1"/>
</dbReference>
<dbReference type="PROSITE" id="PS00101">
    <property type="entry name" value="HEXAPEP_TRANSFERASES"/>
    <property type="match status" value="1"/>
</dbReference>
<reference key="1">
    <citation type="journal article" date="2005" name="Nat. Biotechnol.">
        <title>Complete genome sequence of the plant commensal Pseudomonas fluorescens Pf-5.</title>
        <authorList>
            <person name="Paulsen I.T."/>
            <person name="Press C.M."/>
            <person name="Ravel J."/>
            <person name="Kobayashi D.Y."/>
            <person name="Myers G.S.A."/>
            <person name="Mavrodi D.V."/>
            <person name="DeBoy R.T."/>
            <person name="Seshadri R."/>
            <person name="Ren Q."/>
            <person name="Madupu R."/>
            <person name="Dodson R.J."/>
            <person name="Durkin A.S."/>
            <person name="Brinkac L.M."/>
            <person name="Daugherty S.C."/>
            <person name="Sullivan S.A."/>
            <person name="Rosovitz M.J."/>
            <person name="Gwinn M.L."/>
            <person name="Zhou L."/>
            <person name="Schneider D.J."/>
            <person name="Cartinhour S.W."/>
            <person name="Nelson W.C."/>
            <person name="Weidman J."/>
            <person name="Watkins K."/>
            <person name="Tran K."/>
            <person name="Khouri H."/>
            <person name="Pierson E.A."/>
            <person name="Pierson L.S. III"/>
            <person name="Thomashow L.S."/>
            <person name="Loper J.E."/>
        </authorList>
    </citation>
    <scope>NUCLEOTIDE SEQUENCE [LARGE SCALE GENOMIC DNA]</scope>
    <source>
        <strain>ATCC BAA-477 / NRRL B-23932 / Pf-5</strain>
    </source>
</reference>
<keyword id="KW-0012">Acyltransferase</keyword>
<keyword id="KW-0963">Cytoplasm</keyword>
<keyword id="KW-0441">Lipid A biosynthesis</keyword>
<keyword id="KW-0444">Lipid biosynthesis</keyword>
<keyword id="KW-0443">Lipid metabolism</keyword>
<keyword id="KW-0677">Repeat</keyword>
<keyword id="KW-0808">Transferase</keyword>
<sequence>MSLIDPRAIIDPTAVLADDVEVGPWSIVGAGVEIGEGTVIGPHVILKGPTRIGKHNRIYQFSSVGEDTPDLKYKGEETRLVIGDHNVIREGVTIHRGTVQDRSETTLGDHNLVMAYAHIGHDSVIGNHCILVNNTALAGHVHVDDWAILSGFTLVHQYCHIGAHSFSGMGTAIGKDVPAFVTVFGNPAEARSMNFEGMRRRGFSEDAIHALRRAYKTVYRQGLTVDQALAELAEPAAQFPEVAVFRDSIQSSTRGITR</sequence>
<gene>
    <name evidence="1" type="primary">lpxA</name>
    <name type="ordered locus">PFL_1188</name>
</gene>
<name>LPXA_PSEF5</name>
<comment type="function">
    <text evidence="1">Involved in the biosynthesis of lipid A, a phosphorylated glycolipid that anchors the lipopolysaccharide to the outer membrane of the cell.</text>
</comment>
<comment type="catalytic activity">
    <reaction evidence="1">
        <text>a (3R)-hydroxyacyl-[ACP] + UDP-N-acetyl-alpha-D-glucosamine = a UDP-3-O-[(3R)-3-hydroxyacyl]-N-acetyl-alpha-D-glucosamine + holo-[ACP]</text>
        <dbReference type="Rhea" id="RHEA:67812"/>
        <dbReference type="Rhea" id="RHEA-COMP:9685"/>
        <dbReference type="Rhea" id="RHEA-COMP:9945"/>
        <dbReference type="ChEBI" id="CHEBI:57705"/>
        <dbReference type="ChEBI" id="CHEBI:64479"/>
        <dbReference type="ChEBI" id="CHEBI:78827"/>
        <dbReference type="ChEBI" id="CHEBI:173225"/>
        <dbReference type="EC" id="2.3.1.129"/>
    </reaction>
</comment>
<comment type="pathway">
    <text evidence="1">Glycolipid biosynthesis; lipid IV(A) biosynthesis; lipid IV(A) from (3R)-3-hydroxytetradecanoyl-[acyl-carrier-protein] and UDP-N-acetyl-alpha-D-glucosamine: step 1/6.</text>
</comment>
<comment type="subunit">
    <text evidence="1">Homotrimer.</text>
</comment>
<comment type="subcellular location">
    <subcellularLocation>
        <location evidence="1">Cytoplasm</location>
    </subcellularLocation>
</comment>
<comment type="similarity">
    <text evidence="1">Belongs to the transferase hexapeptide repeat family. LpxA subfamily.</text>
</comment>
<evidence type="ECO:0000255" key="1">
    <source>
        <dbReference type="HAMAP-Rule" id="MF_00387"/>
    </source>
</evidence>